<proteinExistence type="inferred from homology"/>
<feature type="chain" id="PRO_1000023248" description="Thymidylate kinase">
    <location>
        <begin position="1"/>
        <end position="210"/>
    </location>
</feature>
<feature type="binding site" evidence="1">
    <location>
        <begin position="10"/>
        <end position="17"/>
    </location>
    <ligand>
        <name>ATP</name>
        <dbReference type="ChEBI" id="CHEBI:30616"/>
    </ligand>
</feature>
<evidence type="ECO:0000255" key="1">
    <source>
        <dbReference type="HAMAP-Rule" id="MF_00165"/>
    </source>
</evidence>
<protein>
    <recommendedName>
        <fullName evidence="1">Thymidylate kinase</fullName>
        <ecNumber evidence="1">2.7.4.9</ecNumber>
    </recommendedName>
    <alternativeName>
        <fullName evidence="1">dTMP kinase</fullName>
    </alternativeName>
</protein>
<keyword id="KW-0067">ATP-binding</keyword>
<keyword id="KW-0418">Kinase</keyword>
<keyword id="KW-0545">Nucleotide biosynthesis</keyword>
<keyword id="KW-0547">Nucleotide-binding</keyword>
<keyword id="KW-0808">Transferase</keyword>
<sequence length="210" mass="23740">MKGKFIVIEGIDGCGKTTQIDEISRWLPTSGLMGKNSKLIKTREPGGSLLGKKLRNLILDNNKNNKPSSLAELLLYSADRAEHVSKIISPALKKEDWVISDRFSDSTLAYQGYGRHINLEIIKNIESIVCQGEYPDLTIFLEISAEESILRRKNFVPDRMESEGINFLQKVNEGFKLIAKEKKWKVISATQNITAISNEIKETLLKTFRN</sequence>
<reference key="1">
    <citation type="journal article" date="2007" name="PLoS Genet.">
        <title>Patterns and implications of gene gain and loss in the evolution of Prochlorococcus.</title>
        <authorList>
            <person name="Kettler G.C."/>
            <person name="Martiny A.C."/>
            <person name="Huang K."/>
            <person name="Zucker J."/>
            <person name="Coleman M.L."/>
            <person name="Rodrigue S."/>
            <person name="Chen F."/>
            <person name="Lapidus A."/>
            <person name="Ferriera S."/>
            <person name="Johnson J."/>
            <person name="Steglich C."/>
            <person name="Church G.M."/>
            <person name="Richardson P."/>
            <person name="Chisholm S.W."/>
        </authorList>
    </citation>
    <scope>NUCLEOTIDE SEQUENCE [LARGE SCALE GENOMIC DNA]</scope>
    <source>
        <strain>MIT 9515</strain>
    </source>
</reference>
<name>KTHY_PROM5</name>
<accession>A2BUA6</accession>
<comment type="function">
    <text evidence="1">Phosphorylation of dTMP to form dTDP in both de novo and salvage pathways of dTTP synthesis.</text>
</comment>
<comment type="catalytic activity">
    <reaction evidence="1">
        <text>dTMP + ATP = dTDP + ADP</text>
        <dbReference type="Rhea" id="RHEA:13517"/>
        <dbReference type="ChEBI" id="CHEBI:30616"/>
        <dbReference type="ChEBI" id="CHEBI:58369"/>
        <dbReference type="ChEBI" id="CHEBI:63528"/>
        <dbReference type="ChEBI" id="CHEBI:456216"/>
        <dbReference type="EC" id="2.7.4.9"/>
    </reaction>
</comment>
<comment type="similarity">
    <text evidence="1">Belongs to the thymidylate kinase family.</text>
</comment>
<organism>
    <name type="scientific">Prochlorococcus marinus (strain MIT 9515)</name>
    <dbReference type="NCBI Taxonomy" id="167542"/>
    <lineage>
        <taxon>Bacteria</taxon>
        <taxon>Bacillati</taxon>
        <taxon>Cyanobacteriota</taxon>
        <taxon>Cyanophyceae</taxon>
        <taxon>Synechococcales</taxon>
        <taxon>Prochlorococcaceae</taxon>
        <taxon>Prochlorococcus</taxon>
    </lineage>
</organism>
<dbReference type="EC" id="2.7.4.9" evidence="1"/>
<dbReference type="EMBL" id="CP000552">
    <property type="protein sequence ID" value="ABM71367.1"/>
    <property type="molecule type" value="Genomic_DNA"/>
</dbReference>
<dbReference type="RefSeq" id="WP_011819482.1">
    <property type="nucleotide sequence ID" value="NC_008817.1"/>
</dbReference>
<dbReference type="SMR" id="A2BUA6"/>
<dbReference type="STRING" id="167542.P9515_01581"/>
<dbReference type="GeneID" id="60201720"/>
<dbReference type="KEGG" id="pmc:P9515_01581"/>
<dbReference type="eggNOG" id="COG0125">
    <property type="taxonomic scope" value="Bacteria"/>
</dbReference>
<dbReference type="HOGENOM" id="CLU_049131_0_2_3"/>
<dbReference type="OrthoDB" id="9774907at2"/>
<dbReference type="Proteomes" id="UP000001589">
    <property type="component" value="Chromosome"/>
</dbReference>
<dbReference type="GO" id="GO:0005829">
    <property type="term" value="C:cytosol"/>
    <property type="evidence" value="ECO:0007669"/>
    <property type="project" value="TreeGrafter"/>
</dbReference>
<dbReference type="GO" id="GO:0005524">
    <property type="term" value="F:ATP binding"/>
    <property type="evidence" value="ECO:0007669"/>
    <property type="project" value="UniProtKB-UniRule"/>
</dbReference>
<dbReference type="GO" id="GO:0004798">
    <property type="term" value="F:dTMP kinase activity"/>
    <property type="evidence" value="ECO:0007669"/>
    <property type="project" value="UniProtKB-UniRule"/>
</dbReference>
<dbReference type="GO" id="GO:0006233">
    <property type="term" value="P:dTDP biosynthetic process"/>
    <property type="evidence" value="ECO:0007669"/>
    <property type="project" value="InterPro"/>
</dbReference>
<dbReference type="GO" id="GO:0006235">
    <property type="term" value="P:dTTP biosynthetic process"/>
    <property type="evidence" value="ECO:0007669"/>
    <property type="project" value="UniProtKB-UniRule"/>
</dbReference>
<dbReference type="GO" id="GO:0006227">
    <property type="term" value="P:dUDP biosynthetic process"/>
    <property type="evidence" value="ECO:0007669"/>
    <property type="project" value="TreeGrafter"/>
</dbReference>
<dbReference type="CDD" id="cd01672">
    <property type="entry name" value="TMPK"/>
    <property type="match status" value="1"/>
</dbReference>
<dbReference type="FunFam" id="3.40.50.300:FF:000225">
    <property type="entry name" value="Thymidylate kinase"/>
    <property type="match status" value="1"/>
</dbReference>
<dbReference type="Gene3D" id="3.40.50.300">
    <property type="entry name" value="P-loop containing nucleotide triphosphate hydrolases"/>
    <property type="match status" value="1"/>
</dbReference>
<dbReference type="HAMAP" id="MF_00165">
    <property type="entry name" value="Thymidylate_kinase"/>
    <property type="match status" value="1"/>
</dbReference>
<dbReference type="InterPro" id="IPR027417">
    <property type="entry name" value="P-loop_NTPase"/>
</dbReference>
<dbReference type="InterPro" id="IPR039430">
    <property type="entry name" value="Thymidylate_kin-like_dom"/>
</dbReference>
<dbReference type="InterPro" id="IPR018095">
    <property type="entry name" value="Thymidylate_kin_CS"/>
</dbReference>
<dbReference type="InterPro" id="IPR018094">
    <property type="entry name" value="Thymidylate_kinase"/>
</dbReference>
<dbReference type="NCBIfam" id="TIGR00041">
    <property type="entry name" value="DTMP_kinase"/>
    <property type="match status" value="1"/>
</dbReference>
<dbReference type="PANTHER" id="PTHR10344">
    <property type="entry name" value="THYMIDYLATE KINASE"/>
    <property type="match status" value="1"/>
</dbReference>
<dbReference type="PANTHER" id="PTHR10344:SF4">
    <property type="entry name" value="UMP-CMP KINASE 2, MITOCHONDRIAL"/>
    <property type="match status" value="1"/>
</dbReference>
<dbReference type="Pfam" id="PF02223">
    <property type="entry name" value="Thymidylate_kin"/>
    <property type="match status" value="1"/>
</dbReference>
<dbReference type="SUPFAM" id="SSF52540">
    <property type="entry name" value="P-loop containing nucleoside triphosphate hydrolases"/>
    <property type="match status" value="1"/>
</dbReference>
<dbReference type="PROSITE" id="PS01331">
    <property type="entry name" value="THYMIDYLATE_KINASE"/>
    <property type="match status" value="1"/>
</dbReference>
<gene>
    <name evidence="1" type="primary">tmk</name>
    <name type="ordered locus">P9515_01581</name>
</gene>